<sequence length="452" mass="46896">MGRLFGTDGVRGVANADLTAELALGLSVAAAHVLAEAGTFAGHRATAVVGRDPRASGEFLEAAVVAGLASAGVDVLRVGVLPTPAVAHLTGALGADLGVMLSASHNAMPDNGIKFFARGGHKLADELEDRIESVYADHRTGAPWDRPTGSGVGRVRDYDEGLDQYVAHLVGVLPNRLDGLKIVLDEAHGAASRVSPEAFARAGAELVTIGAVPDGLNINDGCGSTHLDLLKAAVVEHGADLGIAHDGDADRCLAVDHTGAEVDGDQILAVLALAMREREALRSDTVVATVMSNLGFKLAMEREGIRFVQTGVGDRYVLEEMKEHGYALGGEQSGHVIILDHATTGDGTLTGLMLAARVAQTGRTLRDLASVMERLPQVLVNVPDVDKSRVTSSAELATAVAEAERELGSTGRVLLRPSGTEPLVRVMVEAADIEQARSVAGRLADSVKSALG</sequence>
<comment type="function">
    <text evidence="1">Catalyzes the conversion of glucosamine-6-phosphate to glucosamine-1-phosphate.</text>
</comment>
<comment type="catalytic activity">
    <reaction evidence="1">
        <text>alpha-D-glucosamine 1-phosphate = D-glucosamine 6-phosphate</text>
        <dbReference type="Rhea" id="RHEA:23424"/>
        <dbReference type="ChEBI" id="CHEBI:58516"/>
        <dbReference type="ChEBI" id="CHEBI:58725"/>
        <dbReference type="EC" id="5.4.2.10"/>
    </reaction>
</comment>
<comment type="cofactor">
    <cofactor evidence="1">
        <name>Mg(2+)</name>
        <dbReference type="ChEBI" id="CHEBI:18420"/>
    </cofactor>
    <text evidence="1">Binds 1 Mg(2+) ion per subunit.</text>
</comment>
<comment type="PTM">
    <text evidence="1">Activated by phosphorylation.</text>
</comment>
<comment type="similarity">
    <text evidence="1">Belongs to the phosphohexose mutase family.</text>
</comment>
<reference key="1">
    <citation type="journal article" date="2002" name="Nature">
        <title>Complete genome sequence of the model actinomycete Streptomyces coelicolor A3(2).</title>
        <authorList>
            <person name="Bentley S.D."/>
            <person name="Chater K.F."/>
            <person name="Cerdeno-Tarraga A.-M."/>
            <person name="Challis G.L."/>
            <person name="Thomson N.R."/>
            <person name="James K.D."/>
            <person name="Harris D.E."/>
            <person name="Quail M.A."/>
            <person name="Kieser H."/>
            <person name="Harper D."/>
            <person name="Bateman A."/>
            <person name="Brown S."/>
            <person name="Chandra G."/>
            <person name="Chen C.W."/>
            <person name="Collins M."/>
            <person name="Cronin A."/>
            <person name="Fraser A."/>
            <person name="Goble A."/>
            <person name="Hidalgo J."/>
            <person name="Hornsby T."/>
            <person name="Howarth S."/>
            <person name="Huang C.-H."/>
            <person name="Kieser T."/>
            <person name="Larke L."/>
            <person name="Murphy L.D."/>
            <person name="Oliver K."/>
            <person name="O'Neil S."/>
            <person name="Rabbinowitsch E."/>
            <person name="Rajandream M.A."/>
            <person name="Rutherford K.M."/>
            <person name="Rutter S."/>
            <person name="Seeger K."/>
            <person name="Saunders D."/>
            <person name="Sharp S."/>
            <person name="Squares R."/>
            <person name="Squares S."/>
            <person name="Taylor K."/>
            <person name="Warren T."/>
            <person name="Wietzorrek A."/>
            <person name="Woodward J.R."/>
            <person name="Barrell B.G."/>
            <person name="Parkhill J."/>
            <person name="Hopwood D.A."/>
        </authorList>
    </citation>
    <scope>NUCLEOTIDE SEQUENCE [LARGE SCALE GENOMIC DNA]</scope>
    <source>
        <strain>ATCC BAA-471 / A3(2) / M145</strain>
    </source>
</reference>
<accession>Q53876</accession>
<evidence type="ECO:0000255" key="1">
    <source>
        <dbReference type="HAMAP-Rule" id="MF_01554"/>
    </source>
</evidence>
<name>GLMM_STRCO</name>
<dbReference type="EC" id="5.4.2.10" evidence="1"/>
<dbReference type="EMBL" id="AL939121">
    <property type="protein sequence ID" value="CAA20392.1"/>
    <property type="molecule type" value="Genomic_DNA"/>
</dbReference>
<dbReference type="PIR" id="T35565">
    <property type="entry name" value="T35565"/>
</dbReference>
<dbReference type="RefSeq" id="NP_628894.1">
    <property type="nucleotide sequence ID" value="NC_003888.3"/>
</dbReference>
<dbReference type="RefSeq" id="WP_003974237.1">
    <property type="nucleotide sequence ID" value="NZ_VNID01000016.1"/>
</dbReference>
<dbReference type="SMR" id="Q53876"/>
<dbReference type="FunCoup" id="Q53876">
    <property type="interactions" value="313"/>
</dbReference>
<dbReference type="STRING" id="100226.gene:17762385"/>
<dbReference type="PaxDb" id="100226-SCO4736"/>
<dbReference type="GeneID" id="91384302"/>
<dbReference type="KEGG" id="sco:SCO4736"/>
<dbReference type="PATRIC" id="fig|100226.15.peg.4807"/>
<dbReference type="eggNOG" id="COG1109">
    <property type="taxonomic scope" value="Bacteria"/>
</dbReference>
<dbReference type="HOGENOM" id="CLU_016950_7_0_11"/>
<dbReference type="InParanoid" id="Q53876"/>
<dbReference type="OrthoDB" id="9803322at2"/>
<dbReference type="PhylomeDB" id="Q53876"/>
<dbReference type="Proteomes" id="UP000001973">
    <property type="component" value="Chromosome"/>
</dbReference>
<dbReference type="GO" id="GO:0005829">
    <property type="term" value="C:cytosol"/>
    <property type="evidence" value="ECO:0000318"/>
    <property type="project" value="GO_Central"/>
</dbReference>
<dbReference type="GO" id="GO:0000287">
    <property type="term" value="F:magnesium ion binding"/>
    <property type="evidence" value="ECO:0007669"/>
    <property type="project" value="UniProtKB-UniRule"/>
</dbReference>
<dbReference type="GO" id="GO:0008966">
    <property type="term" value="F:phosphoglucosamine mutase activity"/>
    <property type="evidence" value="ECO:0000318"/>
    <property type="project" value="GO_Central"/>
</dbReference>
<dbReference type="GO" id="GO:0004615">
    <property type="term" value="F:phosphomannomutase activity"/>
    <property type="evidence" value="ECO:0000318"/>
    <property type="project" value="GO_Central"/>
</dbReference>
<dbReference type="GO" id="GO:0005975">
    <property type="term" value="P:carbohydrate metabolic process"/>
    <property type="evidence" value="ECO:0007669"/>
    <property type="project" value="InterPro"/>
</dbReference>
<dbReference type="GO" id="GO:0009252">
    <property type="term" value="P:peptidoglycan biosynthetic process"/>
    <property type="evidence" value="ECO:0000318"/>
    <property type="project" value="GO_Central"/>
</dbReference>
<dbReference type="GO" id="GO:0006048">
    <property type="term" value="P:UDP-N-acetylglucosamine biosynthetic process"/>
    <property type="evidence" value="ECO:0000318"/>
    <property type="project" value="GO_Central"/>
</dbReference>
<dbReference type="CDD" id="cd05802">
    <property type="entry name" value="GlmM"/>
    <property type="match status" value="1"/>
</dbReference>
<dbReference type="FunFam" id="3.30.310.50:FF:000001">
    <property type="entry name" value="Phosphoglucosamine mutase"/>
    <property type="match status" value="1"/>
</dbReference>
<dbReference type="FunFam" id="3.40.120.10:FF:000001">
    <property type="entry name" value="Phosphoglucosamine mutase"/>
    <property type="match status" value="1"/>
</dbReference>
<dbReference type="FunFam" id="3.40.120.10:FF:000002">
    <property type="entry name" value="Phosphoglucosamine mutase"/>
    <property type="match status" value="1"/>
</dbReference>
<dbReference type="Gene3D" id="3.40.120.10">
    <property type="entry name" value="Alpha-D-Glucose-1,6-Bisphosphate, subunit A, domain 3"/>
    <property type="match status" value="3"/>
</dbReference>
<dbReference type="Gene3D" id="3.30.310.50">
    <property type="entry name" value="Alpha-D-phosphohexomutase, C-terminal domain"/>
    <property type="match status" value="1"/>
</dbReference>
<dbReference type="HAMAP" id="MF_01554_B">
    <property type="entry name" value="GlmM_B"/>
    <property type="match status" value="1"/>
</dbReference>
<dbReference type="InterPro" id="IPR005844">
    <property type="entry name" value="A-D-PHexomutase_a/b/a-I"/>
</dbReference>
<dbReference type="InterPro" id="IPR016055">
    <property type="entry name" value="A-D-PHexomutase_a/b/a-I/II/III"/>
</dbReference>
<dbReference type="InterPro" id="IPR005845">
    <property type="entry name" value="A-D-PHexomutase_a/b/a-II"/>
</dbReference>
<dbReference type="InterPro" id="IPR005846">
    <property type="entry name" value="A-D-PHexomutase_a/b/a-III"/>
</dbReference>
<dbReference type="InterPro" id="IPR005843">
    <property type="entry name" value="A-D-PHexomutase_C"/>
</dbReference>
<dbReference type="InterPro" id="IPR036900">
    <property type="entry name" value="A-D-PHexomutase_C_sf"/>
</dbReference>
<dbReference type="InterPro" id="IPR005841">
    <property type="entry name" value="Alpha-D-phosphohexomutase_SF"/>
</dbReference>
<dbReference type="InterPro" id="IPR006352">
    <property type="entry name" value="GlmM_bact"/>
</dbReference>
<dbReference type="InterPro" id="IPR050060">
    <property type="entry name" value="Phosphoglucosamine_mutase"/>
</dbReference>
<dbReference type="NCBIfam" id="TIGR01455">
    <property type="entry name" value="glmM"/>
    <property type="match status" value="1"/>
</dbReference>
<dbReference type="PANTHER" id="PTHR42946:SF1">
    <property type="entry name" value="PHOSPHOGLUCOMUTASE (ALPHA-D-GLUCOSE-1,6-BISPHOSPHATE-DEPENDENT)"/>
    <property type="match status" value="1"/>
</dbReference>
<dbReference type="PANTHER" id="PTHR42946">
    <property type="entry name" value="PHOSPHOHEXOSE MUTASE"/>
    <property type="match status" value="1"/>
</dbReference>
<dbReference type="Pfam" id="PF02878">
    <property type="entry name" value="PGM_PMM_I"/>
    <property type="match status" value="1"/>
</dbReference>
<dbReference type="Pfam" id="PF02879">
    <property type="entry name" value="PGM_PMM_II"/>
    <property type="match status" value="1"/>
</dbReference>
<dbReference type="Pfam" id="PF02880">
    <property type="entry name" value="PGM_PMM_III"/>
    <property type="match status" value="1"/>
</dbReference>
<dbReference type="Pfam" id="PF00408">
    <property type="entry name" value="PGM_PMM_IV"/>
    <property type="match status" value="1"/>
</dbReference>
<dbReference type="PRINTS" id="PR00509">
    <property type="entry name" value="PGMPMM"/>
</dbReference>
<dbReference type="SUPFAM" id="SSF55957">
    <property type="entry name" value="Phosphoglucomutase, C-terminal domain"/>
    <property type="match status" value="1"/>
</dbReference>
<dbReference type="SUPFAM" id="SSF53738">
    <property type="entry name" value="Phosphoglucomutase, first 3 domains"/>
    <property type="match status" value="3"/>
</dbReference>
<organism>
    <name type="scientific">Streptomyces coelicolor (strain ATCC BAA-471 / A3(2) / M145)</name>
    <dbReference type="NCBI Taxonomy" id="100226"/>
    <lineage>
        <taxon>Bacteria</taxon>
        <taxon>Bacillati</taxon>
        <taxon>Actinomycetota</taxon>
        <taxon>Actinomycetes</taxon>
        <taxon>Kitasatosporales</taxon>
        <taxon>Streptomycetaceae</taxon>
        <taxon>Streptomyces</taxon>
        <taxon>Streptomyces albidoflavus group</taxon>
    </lineage>
</organism>
<keyword id="KW-0413">Isomerase</keyword>
<keyword id="KW-0460">Magnesium</keyword>
<keyword id="KW-0479">Metal-binding</keyword>
<keyword id="KW-0597">Phosphoprotein</keyword>
<keyword id="KW-1185">Reference proteome</keyword>
<gene>
    <name evidence="1" type="primary">glmM</name>
    <name type="ordered locus">SCO4736</name>
    <name type="ORF">SC6G4.14</name>
</gene>
<feature type="chain" id="PRO_0000147983" description="Phosphoglucosamine mutase">
    <location>
        <begin position="1"/>
        <end position="452"/>
    </location>
</feature>
<feature type="active site" description="Phosphoserine intermediate" evidence="1">
    <location>
        <position position="104"/>
    </location>
</feature>
<feature type="binding site" description="via phosphate group" evidence="1">
    <location>
        <position position="104"/>
    </location>
    <ligand>
        <name>Mg(2+)</name>
        <dbReference type="ChEBI" id="CHEBI:18420"/>
    </ligand>
</feature>
<feature type="binding site" evidence="1">
    <location>
        <position position="246"/>
    </location>
    <ligand>
        <name>Mg(2+)</name>
        <dbReference type="ChEBI" id="CHEBI:18420"/>
    </ligand>
</feature>
<feature type="binding site" evidence="1">
    <location>
        <position position="248"/>
    </location>
    <ligand>
        <name>Mg(2+)</name>
        <dbReference type="ChEBI" id="CHEBI:18420"/>
    </ligand>
</feature>
<feature type="binding site" evidence="1">
    <location>
        <position position="250"/>
    </location>
    <ligand>
        <name>Mg(2+)</name>
        <dbReference type="ChEBI" id="CHEBI:18420"/>
    </ligand>
</feature>
<feature type="modified residue" description="Phosphoserine" evidence="1">
    <location>
        <position position="104"/>
    </location>
</feature>
<protein>
    <recommendedName>
        <fullName evidence="1">Phosphoglucosamine mutase</fullName>
        <ecNumber evidence="1">5.4.2.10</ecNumber>
    </recommendedName>
</protein>
<proteinExistence type="inferred from homology"/>